<evidence type="ECO:0000255" key="1">
    <source>
        <dbReference type="HAMAP-Rule" id="MF_01007"/>
    </source>
</evidence>
<comment type="function">
    <text evidence="1">Specifically methylates the N4 position of cytidine in position 1402 (C1402) of 16S rRNA.</text>
</comment>
<comment type="catalytic activity">
    <reaction evidence="1">
        <text>cytidine(1402) in 16S rRNA + S-adenosyl-L-methionine = N(4)-methylcytidine(1402) in 16S rRNA + S-adenosyl-L-homocysteine + H(+)</text>
        <dbReference type="Rhea" id="RHEA:42928"/>
        <dbReference type="Rhea" id="RHEA-COMP:10286"/>
        <dbReference type="Rhea" id="RHEA-COMP:10287"/>
        <dbReference type="ChEBI" id="CHEBI:15378"/>
        <dbReference type="ChEBI" id="CHEBI:57856"/>
        <dbReference type="ChEBI" id="CHEBI:59789"/>
        <dbReference type="ChEBI" id="CHEBI:74506"/>
        <dbReference type="ChEBI" id="CHEBI:82748"/>
        <dbReference type="EC" id="2.1.1.199"/>
    </reaction>
</comment>
<comment type="subcellular location">
    <subcellularLocation>
        <location evidence="1">Cytoplasm</location>
    </subcellularLocation>
</comment>
<comment type="similarity">
    <text evidence="1">Belongs to the methyltransferase superfamily. RsmH family.</text>
</comment>
<accession>Q6GHQ6</accession>
<sequence length="311" mass="35682">MFHHISVMLNETIDYLNVKENGVYIDCTLGGAGHALYLLNQLNDDGRLIAIDQDQTAIDNAKEVLKDHLHKVTFVHSNFRELTQILKDLNIEKVDGIYYDLGVSSPQLDIPERGFSYHHDATLDMRMDQTQELTAYEIVNNWSYEALVKIFYRYGEEKFSKQIARRIEAHREQQPITTTLELVDIIKEGIPAKARRKGGHPAKRVFQALRIAVNDELSAFEDSIEQAIELVKVDGRISVITFHSLEDRLCKQVFQEYEKGPEVPRGLPVIPEAYTPKLKRVNRKPITATEEDLDDNNRARSAKLRVAEILK</sequence>
<name>RSMH_STAAR</name>
<keyword id="KW-0963">Cytoplasm</keyword>
<keyword id="KW-0489">Methyltransferase</keyword>
<keyword id="KW-0698">rRNA processing</keyword>
<keyword id="KW-0949">S-adenosyl-L-methionine</keyword>
<keyword id="KW-0808">Transferase</keyword>
<proteinExistence type="inferred from homology"/>
<gene>
    <name evidence="1" type="primary">rsmH</name>
    <name type="synonym">mraW</name>
    <name type="ordered locus">SAR1155</name>
</gene>
<feature type="chain" id="PRO_0000108708" description="Ribosomal RNA small subunit methyltransferase H">
    <location>
        <begin position="1"/>
        <end position="311"/>
    </location>
</feature>
<feature type="binding site" evidence="1">
    <location>
        <begin position="32"/>
        <end position="34"/>
    </location>
    <ligand>
        <name>S-adenosyl-L-methionine</name>
        <dbReference type="ChEBI" id="CHEBI:59789"/>
    </ligand>
</feature>
<feature type="binding site" evidence="1">
    <location>
        <position position="52"/>
    </location>
    <ligand>
        <name>S-adenosyl-L-methionine</name>
        <dbReference type="ChEBI" id="CHEBI:59789"/>
    </ligand>
</feature>
<feature type="binding site" evidence="1">
    <location>
        <position position="79"/>
    </location>
    <ligand>
        <name>S-adenosyl-L-methionine</name>
        <dbReference type="ChEBI" id="CHEBI:59789"/>
    </ligand>
</feature>
<feature type="binding site" evidence="1">
    <location>
        <position position="100"/>
    </location>
    <ligand>
        <name>S-adenosyl-L-methionine</name>
        <dbReference type="ChEBI" id="CHEBI:59789"/>
    </ligand>
</feature>
<feature type="binding site" evidence="1">
    <location>
        <position position="107"/>
    </location>
    <ligand>
        <name>S-adenosyl-L-methionine</name>
        <dbReference type="ChEBI" id="CHEBI:59789"/>
    </ligand>
</feature>
<reference key="1">
    <citation type="journal article" date="2004" name="Proc. Natl. Acad. Sci. U.S.A.">
        <title>Complete genomes of two clinical Staphylococcus aureus strains: evidence for the rapid evolution of virulence and drug resistance.</title>
        <authorList>
            <person name="Holden M.T.G."/>
            <person name="Feil E.J."/>
            <person name="Lindsay J.A."/>
            <person name="Peacock S.J."/>
            <person name="Day N.P.J."/>
            <person name="Enright M.C."/>
            <person name="Foster T.J."/>
            <person name="Moore C.E."/>
            <person name="Hurst L."/>
            <person name="Atkin R."/>
            <person name="Barron A."/>
            <person name="Bason N."/>
            <person name="Bentley S.D."/>
            <person name="Chillingworth C."/>
            <person name="Chillingworth T."/>
            <person name="Churcher C."/>
            <person name="Clark L."/>
            <person name="Corton C."/>
            <person name="Cronin A."/>
            <person name="Doggett J."/>
            <person name="Dowd L."/>
            <person name="Feltwell T."/>
            <person name="Hance Z."/>
            <person name="Harris B."/>
            <person name="Hauser H."/>
            <person name="Holroyd S."/>
            <person name="Jagels K."/>
            <person name="James K.D."/>
            <person name="Lennard N."/>
            <person name="Line A."/>
            <person name="Mayes R."/>
            <person name="Moule S."/>
            <person name="Mungall K."/>
            <person name="Ormond D."/>
            <person name="Quail M.A."/>
            <person name="Rabbinowitsch E."/>
            <person name="Rutherford K.M."/>
            <person name="Sanders M."/>
            <person name="Sharp S."/>
            <person name="Simmonds M."/>
            <person name="Stevens K."/>
            <person name="Whitehead S."/>
            <person name="Barrell B.G."/>
            <person name="Spratt B.G."/>
            <person name="Parkhill J."/>
        </authorList>
    </citation>
    <scope>NUCLEOTIDE SEQUENCE [LARGE SCALE GENOMIC DNA]</scope>
    <source>
        <strain>MRSA252</strain>
    </source>
</reference>
<protein>
    <recommendedName>
        <fullName evidence="1">Ribosomal RNA small subunit methyltransferase H</fullName>
        <ecNumber evidence="1">2.1.1.199</ecNumber>
    </recommendedName>
    <alternativeName>
        <fullName evidence="1">16S rRNA m(4)C1402 methyltransferase</fullName>
    </alternativeName>
    <alternativeName>
        <fullName evidence="1">rRNA (cytosine-N(4)-)-methyltransferase RsmH</fullName>
    </alternativeName>
</protein>
<organism>
    <name type="scientific">Staphylococcus aureus (strain MRSA252)</name>
    <dbReference type="NCBI Taxonomy" id="282458"/>
    <lineage>
        <taxon>Bacteria</taxon>
        <taxon>Bacillati</taxon>
        <taxon>Bacillota</taxon>
        <taxon>Bacilli</taxon>
        <taxon>Bacillales</taxon>
        <taxon>Staphylococcaceae</taxon>
        <taxon>Staphylococcus</taxon>
    </lineage>
</organism>
<dbReference type="EC" id="2.1.1.199" evidence="1"/>
<dbReference type="EMBL" id="BX571856">
    <property type="protein sequence ID" value="CAG40157.1"/>
    <property type="molecule type" value="Genomic_DNA"/>
</dbReference>
<dbReference type="RefSeq" id="WP_000468384.1">
    <property type="nucleotide sequence ID" value="NC_002952.2"/>
</dbReference>
<dbReference type="SMR" id="Q6GHQ6"/>
<dbReference type="KEGG" id="sar:SAR1155"/>
<dbReference type="HOGENOM" id="CLU_038422_2_0_9"/>
<dbReference type="Proteomes" id="UP000000596">
    <property type="component" value="Chromosome"/>
</dbReference>
<dbReference type="GO" id="GO:0005737">
    <property type="term" value="C:cytoplasm"/>
    <property type="evidence" value="ECO:0007669"/>
    <property type="project" value="UniProtKB-SubCell"/>
</dbReference>
<dbReference type="GO" id="GO:0071424">
    <property type="term" value="F:rRNA (cytosine-N4-)-methyltransferase activity"/>
    <property type="evidence" value="ECO:0007669"/>
    <property type="project" value="UniProtKB-UniRule"/>
</dbReference>
<dbReference type="GO" id="GO:0070475">
    <property type="term" value="P:rRNA base methylation"/>
    <property type="evidence" value="ECO:0007669"/>
    <property type="project" value="UniProtKB-UniRule"/>
</dbReference>
<dbReference type="FunFam" id="1.10.150.170:FF:000001">
    <property type="entry name" value="Ribosomal RNA small subunit methyltransferase H"/>
    <property type="match status" value="1"/>
</dbReference>
<dbReference type="Gene3D" id="1.10.150.170">
    <property type="entry name" value="Putative methyltransferase TM0872, insert domain"/>
    <property type="match status" value="1"/>
</dbReference>
<dbReference type="Gene3D" id="3.40.50.150">
    <property type="entry name" value="Vaccinia Virus protein VP39"/>
    <property type="match status" value="1"/>
</dbReference>
<dbReference type="HAMAP" id="MF_01007">
    <property type="entry name" value="16SrRNA_methyltr_H"/>
    <property type="match status" value="1"/>
</dbReference>
<dbReference type="InterPro" id="IPR002903">
    <property type="entry name" value="RsmH"/>
</dbReference>
<dbReference type="InterPro" id="IPR023397">
    <property type="entry name" value="SAM-dep_MeTrfase_MraW_recog"/>
</dbReference>
<dbReference type="InterPro" id="IPR029063">
    <property type="entry name" value="SAM-dependent_MTases_sf"/>
</dbReference>
<dbReference type="NCBIfam" id="TIGR00006">
    <property type="entry name" value="16S rRNA (cytosine(1402)-N(4))-methyltransferase RsmH"/>
    <property type="match status" value="1"/>
</dbReference>
<dbReference type="PANTHER" id="PTHR11265:SF0">
    <property type="entry name" value="12S RRNA N4-METHYLCYTIDINE METHYLTRANSFERASE"/>
    <property type="match status" value="1"/>
</dbReference>
<dbReference type="PANTHER" id="PTHR11265">
    <property type="entry name" value="S-ADENOSYL-METHYLTRANSFERASE MRAW"/>
    <property type="match status" value="1"/>
</dbReference>
<dbReference type="Pfam" id="PF01795">
    <property type="entry name" value="Methyltransf_5"/>
    <property type="match status" value="1"/>
</dbReference>
<dbReference type="PIRSF" id="PIRSF004486">
    <property type="entry name" value="MraW"/>
    <property type="match status" value="1"/>
</dbReference>
<dbReference type="SUPFAM" id="SSF81799">
    <property type="entry name" value="Putative methyltransferase TM0872, insert domain"/>
    <property type="match status" value="1"/>
</dbReference>
<dbReference type="SUPFAM" id="SSF53335">
    <property type="entry name" value="S-adenosyl-L-methionine-dependent methyltransferases"/>
    <property type="match status" value="1"/>
</dbReference>